<proteinExistence type="inferred from homology"/>
<gene>
    <name evidence="1" type="primary">dut</name>
    <name type="ordered locus">BPEN_638</name>
</gene>
<dbReference type="EC" id="3.6.1.23" evidence="1"/>
<dbReference type="EMBL" id="CP000016">
    <property type="protein sequence ID" value="AAZ41236.1"/>
    <property type="molecule type" value="Genomic_DNA"/>
</dbReference>
<dbReference type="SMR" id="Q491W8"/>
<dbReference type="STRING" id="291272.BPEN_638"/>
<dbReference type="KEGG" id="bpn:BPEN_638"/>
<dbReference type="eggNOG" id="COG0756">
    <property type="taxonomic scope" value="Bacteria"/>
</dbReference>
<dbReference type="HOGENOM" id="CLU_068508_1_1_6"/>
<dbReference type="OrthoDB" id="9809956at2"/>
<dbReference type="UniPathway" id="UPA00610">
    <property type="reaction ID" value="UER00666"/>
</dbReference>
<dbReference type="Proteomes" id="UP000007794">
    <property type="component" value="Chromosome"/>
</dbReference>
<dbReference type="GO" id="GO:0004170">
    <property type="term" value="F:dUTP diphosphatase activity"/>
    <property type="evidence" value="ECO:0007669"/>
    <property type="project" value="UniProtKB-UniRule"/>
</dbReference>
<dbReference type="GO" id="GO:0000287">
    <property type="term" value="F:magnesium ion binding"/>
    <property type="evidence" value="ECO:0007669"/>
    <property type="project" value="UniProtKB-UniRule"/>
</dbReference>
<dbReference type="GO" id="GO:0006226">
    <property type="term" value="P:dUMP biosynthetic process"/>
    <property type="evidence" value="ECO:0007669"/>
    <property type="project" value="UniProtKB-UniRule"/>
</dbReference>
<dbReference type="GO" id="GO:0046081">
    <property type="term" value="P:dUTP catabolic process"/>
    <property type="evidence" value="ECO:0007669"/>
    <property type="project" value="InterPro"/>
</dbReference>
<dbReference type="CDD" id="cd07557">
    <property type="entry name" value="trimeric_dUTPase"/>
    <property type="match status" value="1"/>
</dbReference>
<dbReference type="FunFam" id="2.70.40.10:FF:000002">
    <property type="entry name" value="dUTP diphosphatase"/>
    <property type="match status" value="1"/>
</dbReference>
<dbReference type="Gene3D" id="2.70.40.10">
    <property type="match status" value="1"/>
</dbReference>
<dbReference type="HAMAP" id="MF_00116">
    <property type="entry name" value="dUTPase_bact"/>
    <property type="match status" value="1"/>
</dbReference>
<dbReference type="InterPro" id="IPR008181">
    <property type="entry name" value="dUTPase"/>
</dbReference>
<dbReference type="InterPro" id="IPR029054">
    <property type="entry name" value="dUTPase-like"/>
</dbReference>
<dbReference type="InterPro" id="IPR036157">
    <property type="entry name" value="dUTPase-like_sf"/>
</dbReference>
<dbReference type="InterPro" id="IPR033704">
    <property type="entry name" value="dUTPase_trimeric"/>
</dbReference>
<dbReference type="NCBIfam" id="TIGR00576">
    <property type="entry name" value="dut"/>
    <property type="match status" value="1"/>
</dbReference>
<dbReference type="NCBIfam" id="NF001862">
    <property type="entry name" value="PRK00601.1"/>
    <property type="match status" value="1"/>
</dbReference>
<dbReference type="PANTHER" id="PTHR11241">
    <property type="entry name" value="DEOXYURIDINE 5'-TRIPHOSPHATE NUCLEOTIDOHYDROLASE"/>
    <property type="match status" value="1"/>
</dbReference>
<dbReference type="PANTHER" id="PTHR11241:SF0">
    <property type="entry name" value="DEOXYURIDINE 5'-TRIPHOSPHATE NUCLEOTIDOHYDROLASE"/>
    <property type="match status" value="1"/>
</dbReference>
<dbReference type="Pfam" id="PF00692">
    <property type="entry name" value="dUTPase"/>
    <property type="match status" value="1"/>
</dbReference>
<dbReference type="SUPFAM" id="SSF51283">
    <property type="entry name" value="dUTPase-like"/>
    <property type="match status" value="1"/>
</dbReference>
<organism>
    <name type="scientific">Blochmanniella pennsylvanica (strain BPEN)</name>
    <dbReference type="NCBI Taxonomy" id="291272"/>
    <lineage>
        <taxon>Bacteria</taxon>
        <taxon>Pseudomonadati</taxon>
        <taxon>Pseudomonadota</taxon>
        <taxon>Gammaproteobacteria</taxon>
        <taxon>Enterobacterales</taxon>
        <taxon>Enterobacteriaceae</taxon>
        <taxon>ant endosymbionts</taxon>
        <taxon>Candidatus Blochmanniella</taxon>
    </lineage>
</organism>
<comment type="function">
    <text evidence="1">This enzyme is involved in nucleotide metabolism: it produces dUMP, the immediate precursor of thymidine nucleotides and it decreases the intracellular concentration of dUTP so that uracil cannot be incorporated into DNA.</text>
</comment>
<comment type="catalytic activity">
    <reaction evidence="1">
        <text>dUTP + H2O = dUMP + diphosphate + H(+)</text>
        <dbReference type="Rhea" id="RHEA:10248"/>
        <dbReference type="ChEBI" id="CHEBI:15377"/>
        <dbReference type="ChEBI" id="CHEBI:15378"/>
        <dbReference type="ChEBI" id="CHEBI:33019"/>
        <dbReference type="ChEBI" id="CHEBI:61555"/>
        <dbReference type="ChEBI" id="CHEBI:246422"/>
        <dbReference type="EC" id="3.6.1.23"/>
    </reaction>
</comment>
<comment type="cofactor">
    <cofactor evidence="1">
        <name>Mg(2+)</name>
        <dbReference type="ChEBI" id="CHEBI:18420"/>
    </cofactor>
</comment>
<comment type="pathway">
    <text evidence="1">Pyrimidine metabolism; dUMP biosynthesis; dUMP from dCTP (dUTP route): step 2/2.</text>
</comment>
<comment type="similarity">
    <text evidence="1">Belongs to the dUTPase family.</text>
</comment>
<evidence type="ECO:0000255" key="1">
    <source>
        <dbReference type="HAMAP-Rule" id="MF_00116"/>
    </source>
</evidence>
<reference key="1">
    <citation type="journal article" date="2005" name="Genome Res.">
        <title>Genome sequence of Blochmannia pennsylvanicus indicates parallel evolutionary trends among bacterial mutualists of insects.</title>
        <authorList>
            <person name="Degnan P.H."/>
            <person name="Lazarus A.B."/>
            <person name="Wernegreen J.J."/>
        </authorList>
    </citation>
    <scope>NUCLEOTIDE SEQUENCE [LARGE SCALE GENOMIC DNA]</scope>
    <source>
        <strain>BPEN</strain>
    </source>
</reference>
<sequence>MKIINVKIIDNRIYKHFYLPKYATSGSAGLDLSACLDKPLTIYPGKTHLISTGIAIHISDTKIAGVILPRSGLGHKYGIVLGNLVGLIDSDYQGELIVSLWNRGPKKYIVYPGKRIAQLVFMPIIQVRFSIVKSFIPTERGPHGFGHSM</sequence>
<protein>
    <recommendedName>
        <fullName evidence="1">Deoxyuridine 5'-triphosphate nucleotidohydrolase</fullName>
        <shortName evidence="1">dUTPase</shortName>
        <ecNumber evidence="1">3.6.1.23</ecNumber>
    </recommendedName>
    <alternativeName>
        <fullName evidence="1">dUTP pyrophosphatase</fullName>
    </alternativeName>
</protein>
<name>DUT_BLOPB</name>
<accession>Q491W8</accession>
<feature type="chain" id="PRO_0000231399" description="Deoxyuridine 5'-triphosphate nucleotidohydrolase">
    <location>
        <begin position="1"/>
        <end position="149"/>
    </location>
</feature>
<feature type="binding site" evidence="1">
    <location>
        <begin position="70"/>
        <end position="72"/>
    </location>
    <ligand>
        <name>substrate</name>
    </ligand>
</feature>
<feature type="binding site" evidence="1">
    <location>
        <position position="83"/>
    </location>
    <ligand>
        <name>substrate</name>
    </ligand>
</feature>
<feature type="binding site" evidence="1">
    <location>
        <begin position="87"/>
        <end position="89"/>
    </location>
    <ligand>
        <name>substrate</name>
    </ligand>
</feature>
<keyword id="KW-0378">Hydrolase</keyword>
<keyword id="KW-0460">Magnesium</keyword>
<keyword id="KW-0479">Metal-binding</keyword>
<keyword id="KW-0546">Nucleotide metabolism</keyword>
<keyword id="KW-1185">Reference proteome</keyword>